<reference key="1">
    <citation type="journal article" date="1997" name="Hum. Mol. Genet.">
        <title>Isolation of a new homeobox gene belonging to the Pitx/Rieg family: expression during lens development and mapping to the aphakia region on mouse chromosome 19.</title>
        <authorList>
            <person name="Semina E.V."/>
            <person name="Reiter R.S."/>
            <person name="Murray J.C."/>
        </authorList>
    </citation>
    <scope>NUCLEOTIDE SEQUENCE [MRNA]</scope>
    <source>
        <tissue>Embryo</tissue>
        <tissue>Embryonic carcinoma</tissue>
    </source>
</reference>
<reference key="2">
    <citation type="journal article" date="2004" name="Genome Res.">
        <title>The status, quality, and expansion of the NIH full-length cDNA project: the Mammalian Gene Collection (MGC).</title>
        <authorList>
            <consortium name="The MGC Project Team"/>
        </authorList>
    </citation>
    <scope>NUCLEOTIDE SEQUENCE [LARGE SCALE MRNA]</scope>
    <source>
        <tissue>Brain</tissue>
        <tissue>Testis</tissue>
    </source>
</reference>
<reference key="3">
    <citation type="journal article" date="1998" name="Nat. Genet.">
        <title>A novel homeobox gene PITX3 is mutated in families with autosomal-dominant cataracts and ASMD.</title>
        <authorList>
            <person name="Semina E.V."/>
            <person name="Ferrell R.E."/>
            <person name="Mintz-Hittner H.A."/>
            <person name="Bitoun P."/>
            <person name="Alward W.L.M."/>
            <person name="Reiter R.S."/>
            <person name="Funkhauser C."/>
            <person name="Daack-Hirsch S."/>
            <person name="Murray J.C."/>
        </authorList>
    </citation>
    <scope>DEVELOPMENTAL STAGE</scope>
</reference>
<reference key="4">
    <citation type="journal article" date="2005" name="Dev. Biol.">
        <title>Pitx3 regulates tyrosine hydroxylase expression in the substantia nigra and identifies a subgroup of mesencephalic dopaminergic progenitor neurons during mouse development.</title>
        <authorList>
            <person name="Maxwell S.L."/>
            <person name="Ho H.Y."/>
            <person name="Kuehner E."/>
            <person name="Zhao S."/>
            <person name="Li M."/>
        </authorList>
    </citation>
    <scope>FUNCTION</scope>
    <scope>DISRUPTION PHENOTYPE</scope>
    <scope>TISSUE SPECIFICITY</scope>
</reference>
<reference key="5">
    <citation type="journal article" date="2007" name="Int. J. Dev. Neurosci.">
        <title>Induction of tyrosine hydroxylase expression by the transcription factor Pitx3.</title>
        <authorList>
            <person name="Messmer K."/>
            <person name="Remington M.P."/>
            <person name="Skidmore F."/>
            <person name="Fishman P.S."/>
        </authorList>
    </citation>
    <scope>FUNCTION</scope>
    <scope>SUBCELLULAR LOCATION</scope>
</reference>
<reference key="6">
    <citation type="journal article" date="2009" name="Dev. Dyn.">
        <title>Pitx3 controls multiple aspects of lens development.</title>
        <authorList>
            <person name="Medina-Martinez O."/>
            <person name="Shah R."/>
            <person name="Jamrich M."/>
        </authorList>
    </citation>
    <scope>FUNCTION</scope>
    <scope>DISEASE</scope>
</reference>
<reference key="7">
    <citation type="journal article" date="2009" name="Development">
        <title>Pitx3 potentiates Nurr1 in dopamine neuron terminal differentiation through release of SMRT-mediated repression.</title>
        <authorList>
            <person name="Jacobs F.M."/>
            <person name="van Erp S."/>
            <person name="van der Linden A.J."/>
            <person name="von Oerthel L."/>
            <person name="Burbach J.P."/>
            <person name="Smidt M.P."/>
        </authorList>
    </citation>
    <scope>FUNCTION</scope>
    <scope>INTERACTION WITH SFPQ</scope>
</reference>
<reference key="8">
    <citation type="journal article" date="2009" name="Mech. Dev.">
        <title>Homeodomain protein Pitx3 maintains the mitotic activity of lens epithelial cells.</title>
        <authorList>
            <person name="Ho H.Y."/>
            <person name="Chang K.H."/>
            <person name="Nichols J."/>
            <person name="Li M."/>
        </authorList>
    </citation>
    <scope>FUNCTION</scope>
    <scope>TISSUE SPECIFICITY</scope>
    <scope>DEVELOPMENTAL STAGE</scope>
</reference>
<accession>O35160</accession>
<accession>Q0VB03</accession>
<sequence length="302" mass="31715">MEFGLLGEAEARSPALSLSDAGTPHPPLPEHGCKGQEHSDSEKASASLPGGSPEDGSLKKKQRRQRTHFTSQQLQELEATFQRNRYPDMSTREEIAVWTNLTEARVRVWFKNRRAKWRKRERSQQAELCKGGFAAPLGGLVPPYEEVYPGYSYGNWPPKALAPPLAAKTFPFAFNSVNVGPLASQPVFSPPSSIAASMVPSAAAAPGTVPGPGALQGLGGAPPGLAPAAVSSGAVSCPYASAAAAAAAAASSPYVYRDPCNSSLASLRLKAKQHASFSYPAVPGPPPAANLSPCQYAVERPV</sequence>
<proteinExistence type="evidence at protein level"/>
<evidence type="ECO:0000250" key="1">
    <source>
        <dbReference type="UniProtKB" id="P81062"/>
    </source>
</evidence>
<evidence type="ECO:0000255" key="2"/>
<evidence type="ECO:0000255" key="3">
    <source>
        <dbReference type="PROSITE-ProRule" id="PRU00108"/>
    </source>
</evidence>
<evidence type="ECO:0000255" key="4">
    <source>
        <dbReference type="PROSITE-ProRule" id="PRU00138"/>
    </source>
</evidence>
<evidence type="ECO:0000256" key="5">
    <source>
        <dbReference type="SAM" id="MobiDB-lite"/>
    </source>
</evidence>
<evidence type="ECO:0000269" key="6">
    <source>
    </source>
</evidence>
<evidence type="ECO:0000269" key="7">
    <source>
    </source>
</evidence>
<evidence type="ECO:0000269" key="8">
    <source>
    </source>
</evidence>
<evidence type="ECO:0000269" key="9">
    <source>
    </source>
</evidence>
<evidence type="ECO:0000269" key="10">
    <source>
    </source>
</evidence>
<evidence type="ECO:0000269" key="11">
    <source>
    </source>
</evidence>
<evidence type="ECO:0000305" key="12"/>
<name>PITX3_MOUSE</name>
<keyword id="KW-0010">Activator</keyword>
<keyword id="KW-0217">Developmental protein</keyword>
<keyword id="KW-0238">DNA-binding</keyword>
<keyword id="KW-0371">Homeobox</keyword>
<keyword id="KW-0539">Nucleus</keyword>
<keyword id="KW-0597">Phosphoprotein</keyword>
<keyword id="KW-1185">Reference proteome</keyword>
<keyword id="KW-0804">Transcription</keyword>
<keyword id="KW-0805">Transcription regulation</keyword>
<protein>
    <recommendedName>
        <fullName>Pituitary homeobox 3</fullName>
    </recommendedName>
    <alternativeName>
        <fullName>Homeobox protein PITX3</fullName>
    </alternativeName>
    <alternativeName>
        <fullName>Paired-like homeodomain transcription factor 3</fullName>
    </alternativeName>
</protein>
<comment type="function">
    <text evidence="6 7 8 9 10">Transcriptional regulator which is important for the differentiation and maintenance of meso-diencephalic dopaminergic (mdDA) neurons during development. In addition to its importance during development, it also has roles in the long-term survival and maintenance of the mdDA neurons. Activates NR4A2/NURR1-mediated transcription of genes such as SLC6A3, SLC18A2, TH and DRD2 which are essential for development of mdDA neurons. Acts by decreasing the interaction of NR4A2/NURR1 with the corepressor NCOR2/SMRT which acts through histone deacetylases (HDACs) to keep promoters of NR4A2/NURR1 target genes in a repressed deacetylated state. Essential for the normal lens development and differentiation. Plays a critical role in the maintenance of mitotic activity of lens epithelial cells, fiber cell differentiation and in the control of the temporal and spatial activation of fiber cell-specific crystallins. Positively regulates FOXE3 expression and negatively regulates PROX1 in the anterior lens epithelium, preventing activation of CDKN1B/P27Kip1 and CDKN1C/P57Kip2 and thus maintains lens epithelial cells in cell cycle.</text>
</comment>
<comment type="subunit">
    <text evidence="9">Interacts with SFPQ.</text>
</comment>
<comment type="subcellular location">
    <subcellularLocation>
        <location evidence="3 4 7">Nucleus</location>
    </subcellularLocation>
</comment>
<comment type="tissue specificity">
    <text evidence="6 8">Highly expressed in developing eye lens. Expression is restricted to the substantia nigra and ventral tegmental area in the midbrain.</text>
</comment>
<comment type="developmental stage">
    <text evidence="8 11">First visible in 10.5 dpc embryos where expression is confined to the lens vesicles. Between 11.5 dpc and 12.5 dpc, expressed in both the lens epithelium and differentiating primary fiber cells. In the late fetal stage after the lens is formed, primarily found in the lens epithelium and the lens equator region where lens epithelial cells exit from the cell cycle and differentiate into fiber cells (at protein level). First expressed in the eye at 10 dpc embryos. Throughout eye development, expressed in the lens placode and forming lens pit. From 12 dpc, also detected in the midbrain region, tongue, incisor primordia, condensing mesenchyme around the sternum and vertebrae and in the head muscles.</text>
</comment>
<comment type="disease">
    <text evidence="10">Mutations in Pitx3 appear to be the cause of the aphakia (ak) phenotype, a recessive homozygous disease characterized by small eyes and closed eyelids.</text>
</comment>
<comment type="disruption phenotype">
    <text evidence="6">Mice show loss of nascent substantia nigra dopaminergic neurons at the beginning of their final differentiation and a loss of tyrosine hydroxylase (TH) expression specifically in the substantia nigra neurons.</text>
</comment>
<comment type="similarity">
    <text evidence="12">Belongs to the paired homeobox family. Bicoid subfamily.</text>
</comment>
<dbReference type="EMBL" id="AF005772">
    <property type="protein sequence ID" value="AAB87380.1"/>
    <property type="molecule type" value="mRNA"/>
</dbReference>
<dbReference type="EMBL" id="BC120844">
    <property type="protein sequence ID" value="AAI20845.1"/>
    <property type="molecule type" value="mRNA"/>
</dbReference>
<dbReference type="EMBL" id="BC137810">
    <property type="protein sequence ID" value="AAI37811.1"/>
    <property type="molecule type" value="mRNA"/>
</dbReference>
<dbReference type="CCDS" id="CCDS29872.1"/>
<dbReference type="RefSeq" id="NP_032878.1">
    <property type="nucleotide sequence ID" value="NM_008852.4"/>
</dbReference>
<dbReference type="BMRB" id="O35160"/>
<dbReference type="SMR" id="O35160"/>
<dbReference type="BioGRID" id="202188">
    <property type="interactions" value="1"/>
</dbReference>
<dbReference type="FunCoup" id="O35160">
    <property type="interactions" value="577"/>
</dbReference>
<dbReference type="IntAct" id="O35160">
    <property type="interactions" value="1"/>
</dbReference>
<dbReference type="STRING" id="10090.ENSMUSP00000026259"/>
<dbReference type="PhosphoSitePlus" id="O35160"/>
<dbReference type="PaxDb" id="10090-ENSMUSP00000026259"/>
<dbReference type="ProteomicsDB" id="289587"/>
<dbReference type="Antibodypedia" id="18010">
    <property type="antibodies" value="219 antibodies from 34 providers"/>
</dbReference>
<dbReference type="DNASU" id="18742"/>
<dbReference type="Ensembl" id="ENSMUST00000026259.16">
    <property type="protein sequence ID" value="ENSMUSP00000026259.10"/>
    <property type="gene ID" value="ENSMUSG00000025229.16"/>
</dbReference>
<dbReference type="GeneID" id="18742"/>
<dbReference type="KEGG" id="mmu:18742"/>
<dbReference type="UCSC" id="uc008hsl.1">
    <property type="organism name" value="mouse"/>
</dbReference>
<dbReference type="AGR" id="MGI:1100498"/>
<dbReference type="CTD" id="5309"/>
<dbReference type="MGI" id="MGI:1100498">
    <property type="gene designation" value="Pitx3"/>
</dbReference>
<dbReference type="VEuPathDB" id="HostDB:ENSMUSG00000025229"/>
<dbReference type="eggNOG" id="KOG0486">
    <property type="taxonomic scope" value="Eukaryota"/>
</dbReference>
<dbReference type="GeneTree" id="ENSGT00940000161801"/>
<dbReference type="HOGENOM" id="CLU_030301_0_0_1"/>
<dbReference type="InParanoid" id="O35160"/>
<dbReference type="OMA" id="QRQRTHF"/>
<dbReference type="OrthoDB" id="6159439at2759"/>
<dbReference type="PhylomeDB" id="O35160"/>
<dbReference type="TreeFam" id="TF351940"/>
<dbReference type="BioGRID-ORCS" id="18742">
    <property type="hits" value="0 hits in 80 CRISPR screens"/>
</dbReference>
<dbReference type="PRO" id="PR:O35160"/>
<dbReference type="Proteomes" id="UP000000589">
    <property type="component" value="Chromosome 19"/>
</dbReference>
<dbReference type="RNAct" id="O35160">
    <property type="molecule type" value="protein"/>
</dbReference>
<dbReference type="Bgee" id="ENSMUSG00000025229">
    <property type="expression patterns" value="Expressed in lens of camera-type eye and 69 other cell types or tissues"/>
</dbReference>
<dbReference type="ExpressionAtlas" id="O35160">
    <property type="expression patterns" value="baseline and differential"/>
</dbReference>
<dbReference type="GO" id="GO:0000785">
    <property type="term" value="C:chromatin"/>
    <property type="evidence" value="ECO:0007669"/>
    <property type="project" value="Ensembl"/>
</dbReference>
<dbReference type="GO" id="GO:0005634">
    <property type="term" value="C:nucleus"/>
    <property type="evidence" value="ECO:0000314"/>
    <property type="project" value="UniProtKB"/>
</dbReference>
<dbReference type="GO" id="GO:0001228">
    <property type="term" value="F:DNA-binding transcription activator activity, RNA polymerase II-specific"/>
    <property type="evidence" value="ECO:0000314"/>
    <property type="project" value="NTNU_SB"/>
</dbReference>
<dbReference type="GO" id="GO:0000978">
    <property type="term" value="F:RNA polymerase II cis-regulatory region sequence-specific DNA binding"/>
    <property type="evidence" value="ECO:0000314"/>
    <property type="project" value="NTNU_SB"/>
</dbReference>
<dbReference type="GO" id="GO:1990792">
    <property type="term" value="P:cellular response to glial cell derived neurotrophic factor"/>
    <property type="evidence" value="ECO:0007669"/>
    <property type="project" value="Ensembl"/>
</dbReference>
<dbReference type="GO" id="GO:0071542">
    <property type="term" value="P:dopaminergic neuron differentiation"/>
    <property type="evidence" value="ECO:0000314"/>
    <property type="project" value="UniProtKB"/>
</dbReference>
<dbReference type="GO" id="GO:0002088">
    <property type="term" value="P:lens development in camera-type eye"/>
    <property type="evidence" value="ECO:0000315"/>
    <property type="project" value="UniProtKB"/>
</dbReference>
<dbReference type="GO" id="GO:0070306">
    <property type="term" value="P:lens fiber cell differentiation"/>
    <property type="evidence" value="ECO:0000315"/>
    <property type="project" value="UniProtKB"/>
</dbReference>
<dbReference type="GO" id="GO:0002089">
    <property type="term" value="P:lens morphogenesis in camera-type eye"/>
    <property type="evidence" value="ECO:0000315"/>
    <property type="project" value="UniProtKB"/>
</dbReference>
<dbReference type="GO" id="GO:0007626">
    <property type="term" value="P:locomotory behavior"/>
    <property type="evidence" value="ECO:0000315"/>
    <property type="project" value="MGI"/>
</dbReference>
<dbReference type="GO" id="GO:0030901">
    <property type="term" value="P:midbrain development"/>
    <property type="evidence" value="ECO:0000315"/>
    <property type="project" value="UniProtKB"/>
</dbReference>
<dbReference type="GO" id="GO:0014014">
    <property type="term" value="P:negative regulation of gliogenesis"/>
    <property type="evidence" value="ECO:0007669"/>
    <property type="project" value="Ensembl"/>
</dbReference>
<dbReference type="GO" id="GO:0048666">
    <property type="term" value="P:neuron development"/>
    <property type="evidence" value="ECO:0000315"/>
    <property type="project" value="MGI"/>
</dbReference>
<dbReference type="GO" id="GO:1904935">
    <property type="term" value="P:positive regulation of cell proliferation in midbrain"/>
    <property type="evidence" value="ECO:0007669"/>
    <property type="project" value="Ensembl"/>
</dbReference>
<dbReference type="GO" id="GO:0045893">
    <property type="term" value="P:positive regulation of DNA-templated transcription"/>
    <property type="evidence" value="ECO:0000314"/>
    <property type="project" value="UniProtKB"/>
</dbReference>
<dbReference type="GO" id="GO:0043525">
    <property type="term" value="P:positive regulation of neuron apoptotic process"/>
    <property type="evidence" value="ECO:0007669"/>
    <property type="project" value="Ensembl"/>
</dbReference>
<dbReference type="GO" id="GO:0045944">
    <property type="term" value="P:positive regulation of transcription by RNA polymerase II"/>
    <property type="evidence" value="ECO:0000314"/>
    <property type="project" value="NTNU_SB"/>
</dbReference>
<dbReference type="GO" id="GO:0006355">
    <property type="term" value="P:regulation of DNA-templated transcription"/>
    <property type="evidence" value="ECO:0000314"/>
    <property type="project" value="UniProtKB"/>
</dbReference>
<dbReference type="GO" id="GO:0010468">
    <property type="term" value="P:regulation of gene expression"/>
    <property type="evidence" value="ECO:0000314"/>
    <property type="project" value="MGI"/>
</dbReference>
<dbReference type="GO" id="GO:0042220">
    <property type="term" value="P:response to cocaine"/>
    <property type="evidence" value="ECO:0007669"/>
    <property type="project" value="Ensembl"/>
</dbReference>
<dbReference type="GO" id="GO:0035902">
    <property type="term" value="P:response to immobilization stress"/>
    <property type="evidence" value="ECO:0007669"/>
    <property type="project" value="Ensembl"/>
</dbReference>
<dbReference type="GO" id="GO:1904313">
    <property type="term" value="P:response to methamphetamine hydrochloride"/>
    <property type="evidence" value="ECO:0007669"/>
    <property type="project" value="Ensembl"/>
</dbReference>
<dbReference type="CDD" id="cd00086">
    <property type="entry name" value="homeodomain"/>
    <property type="match status" value="1"/>
</dbReference>
<dbReference type="FunFam" id="1.10.10.60:FF:000031">
    <property type="entry name" value="Homeobox protein"/>
    <property type="match status" value="1"/>
</dbReference>
<dbReference type="Gene3D" id="1.10.10.60">
    <property type="entry name" value="Homeodomain-like"/>
    <property type="match status" value="1"/>
</dbReference>
<dbReference type="InterPro" id="IPR001356">
    <property type="entry name" value="HD"/>
</dbReference>
<dbReference type="InterPro" id="IPR017970">
    <property type="entry name" value="Homeobox_CS"/>
</dbReference>
<dbReference type="InterPro" id="IPR016233">
    <property type="entry name" value="Homeobox_Pitx/unc30"/>
</dbReference>
<dbReference type="InterPro" id="IPR009057">
    <property type="entry name" value="Homeodomain-like_sf"/>
</dbReference>
<dbReference type="InterPro" id="IPR003654">
    <property type="entry name" value="OAR_dom"/>
</dbReference>
<dbReference type="PANTHER" id="PTHR45882:SF2">
    <property type="entry name" value="PITUITARY HOMEOBOX 3"/>
    <property type="match status" value="1"/>
</dbReference>
<dbReference type="PANTHER" id="PTHR45882">
    <property type="entry name" value="PITUITARY HOMEOBOX HOMOLOG PTX1"/>
    <property type="match status" value="1"/>
</dbReference>
<dbReference type="Pfam" id="PF00046">
    <property type="entry name" value="Homeodomain"/>
    <property type="match status" value="1"/>
</dbReference>
<dbReference type="Pfam" id="PF03826">
    <property type="entry name" value="OAR"/>
    <property type="match status" value="1"/>
</dbReference>
<dbReference type="PIRSF" id="PIRSF000563">
    <property type="entry name" value="Homeobox_protein_Pitx/Unc30"/>
    <property type="match status" value="1"/>
</dbReference>
<dbReference type="SMART" id="SM00389">
    <property type="entry name" value="HOX"/>
    <property type="match status" value="1"/>
</dbReference>
<dbReference type="SUPFAM" id="SSF46689">
    <property type="entry name" value="Homeodomain-like"/>
    <property type="match status" value="1"/>
</dbReference>
<dbReference type="PROSITE" id="PS00027">
    <property type="entry name" value="HOMEOBOX_1"/>
    <property type="match status" value="1"/>
</dbReference>
<dbReference type="PROSITE" id="PS50071">
    <property type="entry name" value="HOMEOBOX_2"/>
    <property type="match status" value="1"/>
</dbReference>
<dbReference type="PROSITE" id="PS50803">
    <property type="entry name" value="OAR"/>
    <property type="match status" value="1"/>
</dbReference>
<gene>
    <name type="primary">Pitx3</name>
</gene>
<feature type="chain" id="PRO_0000049230" description="Pituitary homeobox 3">
    <location>
        <begin position="1"/>
        <end position="302"/>
    </location>
</feature>
<feature type="DNA-binding region" description="Homeobox" evidence="3">
    <location>
        <begin position="62"/>
        <end position="121"/>
    </location>
</feature>
<feature type="region of interest" description="Disordered" evidence="5">
    <location>
        <begin position="1"/>
        <end position="71"/>
    </location>
</feature>
<feature type="short sequence motif" description="OAR" evidence="4">
    <location>
        <begin position="262"/>
        <end position="275"/>
    </location>
</feature>
<feature type="short sequence motif" description="Nuclear localization signal" evidence="2">
    <location>
        <begin position="268"/>
        <end position="272"/>
    </location>
</feature>
<feature type="compositionally biased region" description="Basic and acidic residues" evidence="5">
    <location>
        <begin position="31"/>
        <end position="43"/>
    </location>
</feature>
<feature type="modified residue" description="Phosphoserine" evidence="1">
    <location>
        <position position="52"/>
    </location>
</feature>
<feature type="modified residue" description="Phosphoserine" evidence="1">
    <location>
        <position position="57"/>
    </location>
</feature>
<organism>
    <name type="scientific">Mus musculus</name>
    <name type="common">Mouse</name>
    <dbReference type="NCBI Taxonomy" id="10090"/>
    <lineage>
        <taxon>Eukaryota</taxon>
        <taxon>Metazoa</taxon>
        <taxon>Chordata</taxon>
        <taxon>Craniata</taxon>
        <taxon>Vertebrata</taxon>
        <taxon>Euteleostomi</taxon>
        <taxon>Mammalia</taxon>
        <taxon>Eutheria</taxon>
        <taxon>Euarchontoglires</taxon>
        <taxon>Glires</taxon>
        <taxon>Rodentia</taxon>
        <taxon>Myomorpha</taxon>
        <taxon>Muroidea</taxon>
        <taxon>Muridae</taxon>
        <taxon>Murinae</taxon>
        <taxon>Mus</taxon>
        <taxon>Mus</taxon>
    </lineage>
</organism>